<dbReference type="EC" id="6.3.1.19" evidence="1"/>
<dbReference type="EMBL" id="CP000454">
    <property type="protein sequence ID" value="ABK03558.1"/>
    <property type="molecule type" value="Genomic_DNA"/>
</dbReference>
<dbReference type="RefSeq" id="WP_011692024.1">
    <property type="nucleotide sequence ID" value="NC_008541.1"/>
</dbReference>
<dbReference type="SMR" id="A0JWY8"/>
<dbReference type="STRING" id="290399.Arth_2178"/>
<dbReference type="MEROPS" id="U72.001"/>
<dbReference type="DNASU" id="4445204"/>
<dbReference type="KEGG" id="art:Arth_2178"/>
<dbReference type="eggNOG" id="COG0638">
    <property type="taxonomic scope" value="Bacteria"/>
</dbReference>
<dbReference type="HOGENOM" id="CLU_040524_0_1_11"/>
<dbReference type="OrthoDB" id="9760627at2"/>
<dbReference type="UniPathway" id="UPA00997"/>
<dbReference type="UniPathway" id="UPA00998"/>
<dbReference type="Proteomes" id="UP000000754">
    <property type="component" value="Chromosome"/>
</dbReference>
<dbReference type="GO" id="GO:0005524">
    <property type="term" value="F:ATP binding"/>
    <property type="evidence" value="ECO:0007669"/>
    <property type="project" value="UniProtKB-UniRule"/>
</dbReference>
<dbReference type="GO" id="GO:0016879">
    <property type="term" value="F:ligase activity, forming carbon-nitrogen bonds"/>
    <property type="evidence" value="ECO:0007669"/>
    <property type="project" value="InterPro"/>
</dbReference>
<dbReference type="GO" id="GO:0000287">
    <property type="term" value="F:magnesium ion binding"/>
    <property type="evidence" value="ECO:0007669"/>
    <property type="project" value="UniProtKB-UniRule"/>
</dbReference>
<dbReference type="GO" id="GO:0019787">
    <property type="term" value="F:ubiquitin-like protein transferase activity"/>
    <property type="evidence" value="ECO:0007669"/>
    <property type="project" value="UniProtKB-UniRule"/>
</dbReference>
<dbReference type="GO" id="GO:0019941">
    <property type="term" value="P:modification-dependent protein catabolic process"/>
    <property type="evidence" value="ECO:0007669"/>
    <property type="project" value="UniProtKB-UniRule"/>
</dbReference>
<dbReference type="GO" id="GO:0010498">
    <property type="term" value="P:proteasomal protein catabolic process"/>
    <property type="evidence" value="ECO:0007669"/>
    <property type="project" value="UniProtKB-UniRule"/>
</dbReference>
<dbReference type="GO" id="GO:0070490">
    <property type="term" value="P:protein pupylation"/>
    <property type="evidence" value="ECO:0007669"/>
    <property type="project" value="UniProtKB-UniRule"/>
</dbReference>
<dbReference type="HAMAP" id="MF_02111">
    <property type="entry name" value="Pup_ligase"/>
    <property type="match status" value="1"/>
</dbReference>
<dbReference type="InterPro" id="IPR022279">
    <property type="entry name" value="Pup_ligase"/>
</dbReference>
<dbReference type="InterPro" id="IPR004347">
    <property type="entry name" value="Pup_ligase/deamidase"/>
</dbReference>
<dbReference type="NCBIfam" id="TIGR03686">
    <property type="entry name" value="pupylate_PafA"/>
    <property type="match status" value="1"/>
</dbReference>
<dbReference type="PANTHER" id="PTHR42307">
    <property type="entry name" value="PUP DEAMIDASE/DEPUPYLASE"/>
    <property type="match status" value="1"/>
</dbReference>
<dbReference type="PANTHER" id="PTHR42307:SF3">
    <property type="entry name" value="PUP--PROTEIN LIGASE"/>
    <property type="match status" value="1"/>
</dbReference>
<dbReference type="Pfam" id="PF03136">
    <property type="entry name" value="Pup_ligase"/>
    <property type="match status" value="1"/>
</dbReference>
<dbReference type="PIRSF" id="PIRSF018077">
    <property type="entry name" value="UCP018077"/>
    <property type="match status" value="1"/>
</dbReference>
<sequence>MDKRIFGIETEFGISYSSPDSRPLAPEEVARYLFRKVVSWGRSSNVFLTNGSRLYLDVGSHPEYATAECDDLGQLIAHDRAGELILDDLVDEAQERLAAEGFNGTVYLFKNNTDSAGNSYGSHENYLIPRRGEFSRLAEILIPFLVTRQLIAGAGKILKTPHGATFAFSQRADHIWEGVSSATTRSRPIINTRDEPHADAEFYRRLHVIVGDSNMSETTALMKVGTVDLILRMIEAGVIMRDMRMENPIRSIREISHDLSGRALIRLANGRQLTALEIQREYLNKVTSFVAENGAHNQHVPLILDLWERTLTAIESGDTSTIDTEIDWAIKKKLMDSYRKRHGLGLDAPRIAQLDLTYHDISRTRGLYYLLQSRGAVRRVVDDTAVKDAVDAPPQTTRAKLRGDFVRRAQELGRDYTVDWVHLKLNDRAHQTILCKDPFRNVDERVDALLDSMG</sequence>
<name>PAFA_ARTS2</name>
<keyword id="KW-0067">ATP-binding</keyword>
<keyword id="KW-0436">Ligase</keyword>
<keyword id="KW-0460">Magnesium</keyword>
<keyword id="KW-0479">Metal-binding</keyword>
<keyword id="KW-0547">Nucleotide-binding</keyword>
<keyword id="KW-1185">Reference proteome</keyword>
<keyword id="KW-0833">Ubl conjugation pathway</keyword>
<gene>
    <name evidence="1" type="primary">pafA</name>
    <name type="ordered locus">Arth_2178</name>
</gene>
<evidence type="ECO:0000255" key="1">
    <source>
        <dbReference type="HAMAP-Rule" id="MF_02111"/>
    </source>
</evidence>
<proteinExistence type="inferred from homology"/>
<feature type="chain" id="PRO_0000395894" description="Pup--protein ligase">
    <location>
        <begin position="1"/>
        <end position="454"/>
    </location>
</feature>
<feature type="active site" description="Proton acceptor" evidence="1">
    <location>
        <position position="57"/>
    </location>
</feature>
<feature type="binding site" evidence="1">
    <location>
        <position position="9"/>
    </location>
    <ligand>
        <name>Mg(2+)</name>
        <dbReference type="ChEBI" id="CHEBI:18420"/>
    </ligand>
</feature>
<feature type="binding site" evidence="1">
    <location>
        <position position="53"/>
    </location>
    <ligand>
        <name>ATP</name>
        <dbReference type="ChEBI" id="CHEBI:30616"/>
    </ligand>
</feature>
<feature type="binding site" evidence="1">
    <location>
        <position position="55"/>
    </location>
    <ligand>
        <name>Mg(2+)</name>
        <dbReference type="ChEBI" id="CHEBI:18420"/>
    </ligand>
</feature>
<feature type="binding site" evidence="1">
    <location>
        <position position="63"/>
    </location>
    <ligand>
        <name>Mg(2+)</name>
        <dbReference type="ChEBI" id="CHEBI:18420"/>
    </ligand>
</feature>
<feature type="binding site" evidence="1">
    <location>
        <position position="66"/>
    </location>
    <ligand>
        <name>ATP</name>
        <dbReference type="ChEBI" id="CHEBI:30616"/>
    </ligand>
</feature>
<feature type="binding site" evidence="1">
    <location>
        <position position="420"/>
    </location>
    <ligand>
        <name>ATP</name>
        <dbReference type="ChEBI" id="CHEBI:30616"/>
    </ligand>
</feature>
<comment type="function">
    <text evidence="1">Catalyzes the covalent attachment of the prokaryotic ubiquitin-like protein modifier Pup to the proteasomal substrate proteins, thereby targeting them for proteasomal degradation. This tagging system is termed pupylation. The ligation reaction involves the side-chain carboxylate of the C-terminal glutamate of Pup and the side-chain amino group of a substrate lysine.</text>
</comment>
<comment type="catalytic activity">
    <reaction evidence="1">
        <text>ATP + [prokaryotic ubiquitin-like protein]-L-glutamate + [protein]-L-lysine = ADP + phosphate + N(6)-([prokaryotic ubiquitin-like protein]-gamma-L-glutamyl)-[protein]-L-lysine.</text>
        <dbReference type="EC" id="6.3.1.19"/>
    </reaction>
</comment>
<comment type="pathway">
    <text evidence="1">Protein degradation; proteasomal Pup-dependent pathway.</text>
</comment>
<comment type="pathway">
    <text evidence="1">Protein modification; protein pupylation.</text>
</comment>
<comment type="miscellaneous">
    <text evidence="1">The reaction mechanism probably proceeds via the activation of Pup by phosphorylation of its C-terminal glutamate, which is then subject to nucleophilic attack by the substrate lysine, resulting in an isopeptide bond and the release of phosphate as a good leaving group.</text>
</comment>
<comment type="similarity">
    <text evidence="1">Belongs to the Pup ligase/Pup deamidase family. Pup-conjugating enzyme subfamily.</text>
</comment>
<organism>
    <name type="scientific">Arthrobacter sp. (strain FB24)</name>
    <dbReference type="NCBI Taxonomy" id="290399"/>
    <lineage>
        <taxon>Bacteria</taxon>
        <taxon>Bacillati</taxon>
        <taxon>Actinomycetota</taxon>
        <taxon>Actinomycetes</taxon>
        <taxon>Micrococcales</taxon>
        <taxon>Micrococcaceae</taxon>
        <taxon>Arthrobacter</taxon>
    </lineage>
</organism>
<accession>A0JWY8</accession>
<reference key="1">
    <citation type="journal article" date="2013" name="Stand. Genomic Sci.">
        <title>Complete genome sequence of Arthrobacter sp. strain FB24.</title>
        <authorList>
            <person name="Nakatsu C.H."/>
            <person name="Barabote R."/>
            <person name="Thompson S."/>
            <person name="Bruce D."/>
            <person name="Detter C."/>
            <person name="Brettin T."/>
            <person name="Han C."/>
            <person name="Beasley F."/>
            <person name="Chen W."/>
            <person name="Konopka A."/>
            <person name="Xie G."/>
        </authorList>
    </citation>
    <scope>NUCLEOTIDE SEQUENCE [LARGE SCALE GENOMIC DNA]</scope>
    <source>
        <strain>FB24</strain>
    </source>
</reference>
<protein>
    <recommendedName>
        <fullName evidence="1">Pup--protein ligase</fullName>
        <ecNumber evidence="1">6.3.1.19</ecNumber>
    </recommendedName>
    <alternativeName>
        <fullName evidence="1">Proteasome accessory factor A</fullName>
    </alternativeName>
    <alternativeName>
        <fullName evidence="1">Pup-conjugating enzyme</fullName>
    </alternativeName>
</protein>